<evidence type="ECO:0000255" key="1">
    <source>
        <dbReference type="HAMAP-Rule" id="MF_01645"/>
    </source>
</evidence>
<comment type="function">
    <text evidence="1">Catalyzes the conversion of allantoin (5-ureidohydantoin) to allantoic acid by hydrolytic cleavage of the five-member hydantoin ring.</text>
</comment>
<comment type="catalytic activity">
    <reaction evidence="1">
        <text>(S)-allantoin + H2O = allantoate + H(+)</text>
        <dbReference type="Rhea" id="RHEA:17029"/>
        <dbReference type="ChEBI" id="CHEBI:15377"/>
        <dbReference type="ChEBI" id="CHEBI:15378"/>
        <dbReference type="ChEBI" id="CHEBI:15678"/>
        <dbReference type="ChEBI" id="CHEBI:17536"/>
        <dbReference type="EC" id="3.5.2.5"/>
    </reaction>
</comment>
<comment type="cofactor">
    <cofactor evidence="1">
        <name>Zn(2+)</name>
        <dbReference type="ChEBI" id="CHEBI:29105"/>
    </cofactor>
    <text evidence="1">Binds 2 Zn(2+) ions per subunit.</text>
</comment>
<comment type="pathway">
    <text evidence="1">Nitrogen metabolism; (S)-allantoin degradation; allantoate from (S)-allantoin: step 1/1.</text>
</comment>
<comment type="subunit">
    <text evidence="1">Homotetramer.</text>
</comment>
<comment type="PTM">
    <text evidence="1">Carboxylation allows a single lysine to coordinate two zinc ions.</text>
</comment>
<comment type="similarity">
    <text evidence="1">Belongs to the metallo-dependent hydrolases superfamily. Allantoinase family.</text>
</comment>
<proteinExistence type="inferred from homology"/>
<organism>
    <name type="scientific">Desulfitobacterium hafniense (strain DSM 10664 / DCB-2)</name>
    <dbReference type="NCBI Taxonomy" id="272564"/>
    <lineage>
        <taxon>Bacteria</taxon>
        <taxon>Bacillati</taxon>
        <taxon>Bacillota</taxon>
        <taxon>Clostridia</taxon>
        <taxon>Eubacteriales</taxon>
        <taxon>Desulfitobacteriaceae</taxon>
        <taxon>Desulfitobacterium</taxon>
    </lineage>
</organism>
<protein>
    <recommendedName>
        <fullName evidence="1">Allantoinase</fullName>
        <ecNumber evidence="1">3.5.2.5</ecNumber>
    </recommendedName>
    <alternativeName>
        <fullName evidence="1">Allantoin-utilizing enzyme</fullName>
    </alternativeName>
</protein>
<name>ALLB_DESHD</name>
<accession>B8G120</accession>
<feature type="chain" id="PRO_1000186916" description="Allantoinase">
    <location>
        <begin position="1"/>
        <end position="449"/>
    </location>
</feature>
<feature type="binding site" evidence="1">
    <location>
        <position position="61"/>
    </location>
    <ligand>
        <name>Zn(2+)</name>
        <dbReference type="ChEBI" id="CHEBI:29105"/>
        <label>1</label>
    </ligand>
</feature>
<feature type="binding site" evidence="1">
    <location>
        <position position="63"/>
    </location>
    <ligand>
        <name>Zn(2+)</name>
        <dbReference type="ChEBI" id="CHEBI:29105"/>
        <label>1</label>
    </ligand>
</feature>
<feature type="binding site" description="via carbamate group" evidence="1">
    <location>
        <position position="148"/>
    </location>
    <ligand>
        <name>Zn(2+)</name>
        <dbReference type="ChEBI" id="CHEBI:29105"/>
        <label>1</label>
    </ligand>
</feature>
<feature type="binding site" description="via carbamate group" evidence="1">
    <location>
        <position position="148"/>
    </location>
    <ligand>
        <name>Zn(2+)</name>
        <dbReference type="ChEBI" id="CHEBI:29105"/>
        <label>2</label>
    </ligand>
</feature>
<feature type="binding site" evidence="1">
    <location>
        <position position="184"/>
    </location>
    <ligand>
        <name>Zn(2+)</name>
        <dbReference type="ChEBI" id="CHEBI:29105"/>
        <label>2</label>
    </ligand>
</feature>
<feature type="binding site" evidence="1">
    <location>
        <position position="240"/>
    </location>
    <ligand>
        <name>Zn(2+)</name>
        <dbReference type="ChEBI" id="CHEBI:29105"/>
        <label>2</label>
    </ligand>
</feature>
<feature type="binding site" evidence="1">
    <location>
        <position position="313"/>
    </location>
    <ligand>
        <name>Zn(2+)</name>
        <dbReference type="ChEBI" id="CHEBI:29105"/>
        <label>1</label>
    </ligand>
</feature>
<feature type="modified residue" description="N6-carboxylysine" evidence="1">
    <location>
        <position position="148"/>
    </location>
</feature>
<dbReference type="EC" id="3.5.2.5" evidence="1"/>
<dbReference type="EMBL" id="CP001336">
    <property type="protein sequence ID" value="ACL19235.1"/>
    <property type="molecule type" value="Genomic_DNA"/>
</dbReference>
<dbReference type="RefSeq" id="WP_005813769.1">
    <property type="nucleotide sequence ID" value="NC_011830.1"/>
</dbReference>
<dbReference type="SMR" id="B8G120"/>
<dbReference type="KEGG" id="dhd:Dhaf_1177"/>
<dbReference type="HOGENOM" id="CLU_015572_4_2_9"/>
<dbReference type="UniPathway" id="UPA00395">
    <property type="reaction ID" value="UER00653"/>
</dbReference>
<dbReference type="Proteomes" id="UP000007726">
    <property type="component" value="Chromosome"/>
</dbReference>
<dbReference type="GO" id="GO:0005737">
    <property type="term" value="C:cytoplasm"/>
    <property type="evidence" value="ECO:0007669"/>
    <property type="project" value="TreeGrafter"/>
</dbReference>
<dbReference type="GO" id="GO:0004038">
    <property type="term" value="F:allantoinase activity"/>
    <property type="evidence" value="ECO:0007669"/>
    <property type="project" value="UniProtKB-UniRule"/>
</dbReference>
<dbReference type="GO" id="GO:0050897">
    <property type="term" value="F:cobalt ion binding"/>
    <property type="evidence" value="ECO:0007669"/>
    <property type="project" value="InterPro"/>
</dbReference>
<dbReference type="GO" id="GO:0008270">
    <property type="term" value="F:zinc ion binding"/>
    <property type="evidence" value="ECO:0007669"/>
    <property type="project" value="InterPro"/>
</dbReference>
<dbReference type="GO" id="GO:0000256">
    <property type="term" value="P:allantoin catabolic process"/>
    <property type="evidence" value="ECO:0007669"/>
    <property type="project" value="UniProtKB-UniRule"/>
</dbReference>
<dbReference type="GO" id="GO:0006145">
    <property type="term" value="P:purine nucleobase catabolic process"/>
    <property type="evidence" value="ECO:0007669"/>
    <property type="project" value="TreeGrafter"/>
</dbReference>
<dbReference type="CDD" id="cd01315">
    <property type="entry name" value="L-HYD_ALN"/>
    <property type="match status" value="1"/>
</dbReference>
<dbReference type="Gene3D" id="3.20.20.140">
    <property type="entry name" value="Metal-dependent hydrolases"/>
    <property type="match status" value="1"/>
</dbReference>
<dbReference type="Gene3D" id="2.30.40.10">
    <property type="entry name" value="Urease, subunit C, domain 1"/>
    <property type="match status" value="1"/>
</dbReference>
<dbReference type="HAMAP" id="MF_01645">
    <property type="entry name" value="Hydantoinase"/>
    <property type="match status" value="1"/>
</dbReference>
<dbReference type="InterPro" id="IPR017593">
    <property type="entry name" value="Allantoinase"/>
</dbReference>
<dbReference type="InterPro" id="IPR047604">
    <property type="entry name" value="Allantoinase_bact"/>
</dbReference>
<dbReference type="InterPro" id="IPR006680">
    <property type="entry name" value="Amidohydro-rel"/>
</dbReference>
<dbReference type="InterPro" id="IPR050138">
    <property type="entry name" value="DHOase/Allantoinase_Hydrolase"/>
</dbReference>
<dbReference type="InterPro" id="IPR011059">
    <property type="entry name" value="Metal-dep_hydrolase_composite"/>
</dbReference>
<dbReference type="InterPro" id="IPR032466">
    <property type="entry name" value="Metal_Hydrolase"/>
</dbReference>
<dbReference type="NCBIfam" id="TIGR03178">
    <property type="entry name" value="allantoinase"/>
    <property type="match status" value="1"/>
</dbReference>
<dbReference type="PANTHER" id="PTHR43668">
    <property type="entry name" value="ALLANTOINASE"/>
    <property type="match status" value="1"/>
</dbReference>
<dbReference type="PANTHER" id="PTHR43668:SF4">
    <property type="entry name" value="ALLANTOINASE"/>
    <property type="match status" value="1"/>
</dbReference>
<dbReference type="Pfam" id="PF01979">
    <property type="entry name" value="Amidohydro_1"/>
    <property type="match status" value="1"/>
</dbReference>
<dbReference type="SUPFAM" id="SSF51338">
    <property type="entry name" value="Composite domain of metallo-dependent hydrolases"/>
    <property type="match status" value="1"/>
</dbReference>
<dbReference type="SUPFAM" id="SSF51556">
    <property type="entry name" value="Metallo-dependent hydrolases"/>
    <property type="match status" value="1"/>
</dbReference>
<keyword id="KW-0378">Hydrolase</keyword>
<keyword id="KW-0479">Metal-binding</keyword>
<keyword id="KW-0659">Purine metabolism</keyword>
<keyword id="KW-0862">Zinc</keyword>
<sequence length="449" mass="49300">MSHYDLILRNGNVVCPDGVRKADIAVSDGKIVLIAEEIPGDAKEIIDAAGKHIFPGITDGHVHFNDPGRTEWETITTGSSALAAGGGVAYFDMPLNCSPCTLDAVNFNNKLAVAQKDSLVDYGFWGGLTSANLDKLDELAECGVIGFKAFACHSGIDEFPRMDDYTALVGMEKLAKLGLPLMVHCENAEITKELTELSLANNRTGVRDYFAARPPITEIENVSRMITFAEETGCKLIIAHISTAKAVELVAQARARGVDVYCETIGHYLYLTGDDVERLGTVAKCSPPIRDGENQLQMWGRLFNDNIAFVSSDHSPCDPKLKNGEFMRVWGGISACQTTLQGLLTHAYHDRKFPLVKIAQLTAQHVNEIFKIKDKGQIALGYDADFALVDLDHEFTLQAEDLFYKHKVSPYVGDRFRGSVSQTILRGTTIYKDGKIVSQPIGKHLRPHQ</sequence>
<gene>
    <name evidence="1" type="primary">allB</name>
    <name type="ordered locus">Dhaf_1177</name>
</gene>
<reference key="1">
    <citation type="journal article" date="2012" name="BMC Microbiol.">
        <title>Genome sequence of Desulfitobacterium hafniense DCB-2, a Gram-positive anaerobe capable of dehalogenation and metal reduction.</title>
        <authorList>
            <person name="Kim S.H."/>
            <person name="Harzman C."/>
            <person name="Davis J.K."/>
            <person name="Hutcheson R."/>
            <person name="Broderick J.B."/>
            <person name="Marsh T.L."/>
            <person name="Tiedje J.M."/>
        </authorList>
    </citation>
    <scope>NUCLEOTIDE SEQUENCE [LARGE SCALE GENOMIC DNA]</scope>
    <source>
        <strain>DSM 10664 / DCB-2</strain>
    </source>
</reference>